<sequence length="256" mass="27754">MPITANTLYRDSFNFLRNQIAAILLLALLTAFITVMLNQTFMPASEQLSILSIPENDITSSGNLSISEIVSQMTPEQQMVLLRVSAVATFSALVGNVLLVGGLLTLIAMVSQGRRVSALQAIGLSLPILPRLLVLMFISTLVIQLGLTFFIVPGVAIAIALSLSPIIVTNERMGIFAAMKASAQLAFANVRLIVPAMMLWIAVKLLLLFLISRFTVLPPTIATIVLSTLSNLASALLLVYLFRLYMLLRPVSLDKQ</sequence>
<evidence type="ECO:0000255" key="1">
    <source>
        <dbReference type="HAMAP-Rule" id="MF_01067"/>
    </source>
</evidence>
<dbReference type="EMBL" id="CP000720">
    <property type="protein sequence ID" value="ABS49419.1"/>
    <property type="molecule type" value="Genomic_DNA"/>
</dbReference>
<dbReference type="RefSeq" id="WP_002210639.1">
    <property type="nucleotide sequence ID" value="NC_009708.1"/>
</dbReference>
<dbReference type="KEGG" id="ypi:YpsIP31758_1942"/>
<dbReference type="HOGENOM" id="CLU_073287_0_0_6"/>
<dbReference type="Proteomes" id="UP000002412">
    <property type="component" value="Chromosome"/>
</dbReference>
<dbReference type="GO" id="GO:0005886">
    <property type="term" value="C:plasma membrane"/>
    <property type="evidence" value="ECO:0007669"/>
    <property type="project" value="UniProtKB-SubCell"/>
</dbReference>
<dbReference type="HAMAP" id="MF_01067">
    <property type="entry name" value="UPF0259"/>
    <property type="match status" value="1"/>
</dbReference>
<dbReference type="InterPro" id="IPR009627">
    <property type="entry name" value="UPF0259"/>
</dbReference>
<dbReference type="NCBIfam" id="NF002774">
    <property type="entry name" value="PRK02868.1"/>
    <property type="match status" value="1"/>
</dbReference>
<dbReference type="Pfam" id="PF06790">
    <property type="entry name" value="UPF0259"/>
    <property type="match status" value="1"/>
</dbReference>
<gene>
    <name type="ordered locus">YpsIP31758_1942</name>
</gene>
<protein>
    <recommendedName>
        <fullName evidence="1">UPF0259 membrane protein YpsIP31758_1942</fullName>
    </recommendedName>
</protein>
<accession>A7FI39</accession>
<comment type="subcellular location">
    <subcellularLocation>
        <location evidence="1">Cell inner membrane</location>
        <topology evidence="1">Multi-pass membrane protein</topology>
    </subcellularLocation>
</comment>
<comment type="similarity">
    <text evidence="1">Belongs to the UPF0259 family.</text>
</comment>
<proteinExistence type="inferred from homology"/>
<keyword id="KW-0997">Cell inner membrane</keyword>
<keyword id="KW-1003">Cell membrane</keyword>
<keyword id="KW-0472">Membrane</keyword>
<keyword id="KW-0812">Transmembrane</keyword>
<keyword id="KW-1133">Transmembrane helix</keyword>
<reference key="1">
    <citation type="journal article" date="2007" name="PLoS Genet.">
        <title>The complete genome sequence of Yersinia pseudotuberculosis IP31758, the causative agent of Far East scarlet-like fever.</title>
        <authorList>
            <person name="Eppinger M."/>
            <person name="Rosovitz M.J."/>
            <person name="Fricke W.F."/>
            <person name="Rasko D.A."/>
            <person name="Kokorina G."/>
            <person name="Fayolle C."/>
            <person name="Lindler L.E."/>
            <person name="Carniel E."/>
            <person name="Ravel J."/>
        </authorList>
    </citation>
    <scope>NUCLEOTIDE SEQUENCE [LARGE SCALE GENOMIC DNA]</scope>
    <source>
        <strain>IP 31758</strain>
    </source>
</reference>
<organism>
    <name type="scientific">Yersinia pseudotuberculosis serotype O:1b (strain IP 31758)</name>
    <dbReference type="NCBI Taxonomy" id="349747"/>
    <lineage>
        <taxon>Bacteria</taxon>
        <taxon>Pseudomonadati</taxon>
        <taxon>Pseudomonadota</taxon>
        <taxon>Gammaproteobacteria</taxon>
        <taxon>Enterobacterales</taxon>
        <taxon>Yersiniaceae</taxon>
        <taxon>Yersinia</taxon>
    </lineage>
</organism>
<feature type="chain" id="PRO_1000064538" description="UPF0259 membrane protein YpsIP31758_1942">
    <location>
        <begin position="1"/>
        <end position="256"/>
    </location>
</feature>
<feature type="transmembrane region" description="Helical" evidence="1">
    <location>
        <begin position="20"/>
        <end position="40"/>
    </location>
</feature>
<feature type="transmembrane region" description="Helical" evidence="1">
    <location>
        <begin position="90"/>
        <end position="110"/>
    </location>
</feature>
<feature type="transmembrane region" description="Helical" evidence="1">
    <location>
        <begin position="118"/>
        <end position="138"/>
    </location>
</feature>
<feature type="transmembrane region" description="Helical" evidence="1">
    <location>
        <begin position="141"/>
        <end position="161"/>
    </location>
</feature>
<feature type="transmembrane region" description="Helical" evidence="1">
    <location>
        <begin position="192"/>
        <end position="212"/>
    </location>
</feature>
<feature type="transmembrane region" description="Helical" evidence="1">
    <location>
        <begin position="221"/>
        <end position="241"/>
    </location>
</feature>
<name>Y1942_YERP3</name>